<protein>
    <recommendedName>
        <fullName evidence="2">Exoribonuclease 2</fullName>
        <ecNumber evidence="2">3.1.13.1</ecNumber>
    </recommendedName>
    <alternativeName>
        <fullName evidence="2">Exoribonuclease II</fullName>
        <shortName evidence="2">RNase II</shortName>
        <shortName evidence="2">Ribonuclease II</shortName>
    </alternativeName>
</protein>
<dbReference type="EC" id="3.1.13.1" evidence="2"/>
<dbReference type="EMBL" id="AE005674">
    <property type="protein sequence ID" value="AAN42902.1"/>
    <property type="molecule type" value="Genomic_DNA"/>
</dbReference>
<dbReference type="EMBL" id="AE014073">
    <property type="protein sequence ID" value="AAP16785.1"/>
    <property type="molecule type" value="Genomic_DNA"/>
</dbReference>
<dbReference type="RefSeq" id="NP_707195.1">
    <property type="nucleotide sequence ID" value="NC_004337.2"/>
</dbReference>
<dbReference type="RefSeq" id="WP_000485028.1">
    <property type="nucleotide sequence ID" value="NZ_WPGW01000009.1"/>
</dbReference>
<dbReference type="SMR" id="P59107"/>
<dbReference type="STRING" id="198214.SF1291"/>
<dbReference type="PaxDb" id="198214-SF1291"/>
<dbReference type="GeneID" id="1024215"/>
<dbReference type="KEGG" id="sfl:SF1291"/>
<dbReference type="KEGG" id="sfx:S1373"/>
<dbReference type="PATRIC" id="fig|198214.7.peg.1516"/>
<dbReference type="HOGENOM" id="CLU_002333_7_3_6"/>
<dbReference type="Proteomes" id="UP000001006">
    <property type="component" value="Chromosome"/>
</dbReference>
<dbReference type="Proteomes" id="UP000002673">
    <property type="component" value="Chromosome"/>
</dbReference>
<dbReference type="GO" id="GO:0005829">
    <property type="term" value="C:cytosol"/>
    <property type="evidence" value="ECO:0007669"/>
    <property type="project" value="TreeGrafter"/>
</dbReference>
<dbReference type="GO" id="GO:0008859">
    <property type="term" value="F:exoribonuclease II activity"/>
    <property type="evidence" value="ECO:0007669"/>
    <property type="project" value="UniProtKB-UniRule"/>
</dbReference>
<dbReference type="GO" id="GO:0003723">
    <property type="term" value="F:RNA binding"/>
    <property type="evidence" value="ECO:0007669"/>
    <property type="project" value="UniProtKB-KW"/>
</dbReference>
<dbReference type="GO" id="GO:0006402">
    <property type="term" value="P:mRNA catabolic process"/>
    <property type="evidence" value="ECO:0007669"/>
    <property type="project" value="UniProtKB-UniRule"/>
</dbReference>
<dbReference type="FunFam" id="2.40.50.140:FF:000079">
    <property type="entry name" value="Exoribonuclease 2"/>
    <property type="match status" value="1"/>
</dbReference>
<dbReference type="FunFam" id="2.40.50.140:FF:000081">
    <property type="entry name" value="Exoribonuclease 2"/>
    <property type="match status" value="1"/>
</dbReference>
<dbReference type="FunFam" id="2.40.50.640:FF:000001">
    <property type="entry name" value="Exoribonuclease 2"/>
    <property type="match status" value="1"/>
</dbReference>
<dbReference type="Gene3D" id="2.40.50.640">
    <property type="match status" value="1"/>
</dbReference>
<dbReference type="Gene3D" id="2.40.50.140">
    <property type="entry name" value="Nucleic acid-binding proteins"/>
    <property type="match status" value="2"/>
</dbReference>
<dbReference type="HAMAP" id="MF_01036">
    <property type="entry name" value="RNase_II"/>
    <property type="match status" value="1"/>
</dbReference>
<dbReference type="InterPro" id="IPR011129">
    <property type="entry name" value="CSD"/>
</dbReference>
<dbReference type="InterPro" id="IPR012340">
    <property type="entry name" value="NA-bd_OB-fold"/>
</dbReference>
<dbReference type="InterPro" id="IPR013223">
    <property type="entry name" value="RNase_B_OB_dom"/>
</dbReference>
<dbReference type="InterPro" id="IPR011804">
    <property type="entry name" value="RNase_II"/>
</dbReference>
<dbReference type="InterPro" id="IPR001900">
    <property type="entry name" value="RNase_II/R"/>
</dbReference>
<dbReference type="InterPro" id="IPR022966">
    <property type="entry name" value="RNase_II/R_CS"/>
</dbReference>
<dbReference type="InterPro" id="IPR004476">
    <property type="entry name" value="RNase_II/RNase_R"/>
</dbReference>
<dbReference type="InterPro" id="IPR050180">
    <property type="entry name" value="RNR_Ribonuclease"/>
</dbReference>
<dbReference type="InterPro" id="IPR003029">
    <property type="entry name" value="S1_domain"/>
</dbReference>
<dbReference type="NCBIfam" id="TIGR00358">
    <property type="entry name" value="3_prime_RNase"/>
    <property type="match status" value="1"/>
</dbReference>
<dbReference type="NCBIfam" id="NF003455">
    <property type="entry name" value="PRK05054.1"/>
    <property type="match status" value="1"/>
</dbReference>
<dbReference type="NCBIfam" id="TIGR02062">
    <property type="entry name" value="RNase_B"/>
    <property type="match status" value="1"/>
</dbReference>
<dbReference type="PANTHER" id="PTHR23355:SF37">
    <property type="entry name" value="EXORIBONUCLEASE 2"/>
    <property type="match status" value="1"/>
</dbReference>
<dbReference type="PANTHER" id="PTHR23355">
    <property type="entry name" value="RIBONUCLEASE"/>
    <property type="match status" value="1"/>
</dbReference>
<dbReference type="Pfam" id="PF08206">
    <property type="entry name" value="OB_RNB"/>
    <property type="match status" value="1"/>
</dbReference>
<dbReference type="Pfam" id="PF00773">
    <property type="entry name" value="RNB"/>
    <property type="match status" value="1"/>
</dbReference>
<dbReference type="Pfam" id="PF00575">
    <property type="entry name" value="S1"/>
    <property type="match status" value="1"/>
</dbReference>
<dbReference type="SMART" id="SM00357">
    <property type="entry name" value="CSP"/>
    <property type="match status" value="1"/>
</dbReference>
<dbReference type="SMART" id="SM00955">
    <property type="entry name" value="RNB"/>
    <property type="match status" value="1"/>
</dbReference>
<dbReference type="SMART" id="SM00316">
    <property type="entry name" value="S1"/>
    <property type="match status" value="1"/>
</dbReference>
<dbReference type="SUPFAM" id="SSF50249">
    <property type="entry name" value="Nucleic acid-binding proteins"/>
    <property type="match status" value="4"/>
</dbReference>
<dbReference type="PROSITE" id="PS01175">
    <property type="entry name" value="RIBONUCLEASE_II"/>
    <property type="match status" value="1"/>
</dbReference>
<organism>
    <name type="scientific">Shigella flexneri</name>
    <dbReference type="NCBI Taxonomy" id="623"/>
    <lineage>
        <taxon>Bacteria</taxon>
        <taxon>Pseudomonadati</taxon>
        <taxon>Pseudomonadota</taxon>
        <taxon>Gammaproteobacteria</taxon>
        <taxon>Enterobacterales</taxon>
        <taxon>Enterobacteriaceae</taxon>
        <taxon>Shigella</taxon>
    </lineage>
</organism>
<evidence type="ECO:0000255" key="1"/>
<evidence type="ECO:0000255" key="2">
    <source>
        <dbReference type="HAMAP-Rule" id="MF_01036"/>
    </source>
</evidence>
<sequence>MFQDNPLLAQLKQQLHSQTPRAEGVVKATEKGFGFLEVDAQKSYFIPPPQMKKVMHGDRIIAVIHSEKERESAEPEELVEPFLTRFVGKVQGKNDRLTIVPDHPLLKDAIPCRAARGLNHEFKEGDWAVAEMRRHPLKGDRSFYAELTQYITFGDDHFVPWWVTLARHNLEKEAPDGVATEMLDEGLVREDLTSLDFVTIDSASTEDMDDALFAKALPDDKLQLIVAIADPTAWIAEGSKLDKAAKIRAFTNYLPGFNIPMLPRELSDDLCSLRANEVRPVLACRMTLSADGTIEDNIEFFAATIESKAKLVYDQVSDWLENTGDWKPESEAIAEQVRLLAQICQRRGEWRHNHALVFKDRPDYRFILGEKGEVLDIVAEPRRIANRIVEEAMIAANICAARVLRDKLGFGIYNVHMGFDPANADALAALLKTHGLHVDAEEVLTLDGFCKLRRELDAQPTGFLDSRIRRFQSFAEISSEPGPHFGLGLEAYATWTSPIRKYGDMINHRLLKAVIKGETATRPQDEITVQMAERRRLNRMAERDVGDWLYARFLKDKAGTGTRFAAEIVDISRGGMRVRLVDNGAIAFIPAPFLHAVRDELVCSQENGTVQIKGETVYKVTDVIDVTIAEVRMETRSIIARPVA</sequence>
<feature type="chain" id="PRO_0000166389" description="Exoribonuclease 2">
    <location>
        <begin position="1"/>
        <end position="644"/>
    </location>
</feature>
<feature type="domain" description="RNB" evidence="1">
    <location>
        <begin position="189"/>
        <end position="516"/>
    </location>
</feature>
<feature type="domain" description="S1 motif" evidence="2">
    <location>
        <begin position="561"/>
        <end position="643"/>
    </location>
</feature>
<keyword id="KW-0963">Cytoplasm</keyword>
<keyword id="KW-0269">Exonuclease</keyword>
<keyword id="KW-0378">Hydrolase</keyword>
<keyword id="KW-0540">Nuclease</keyword>
<keyword id="KW-1185">Reference proteome</keyword>
<keyword id="KW-0694">RNA-binding</keyword>
<accession>P59107</accession>
<reference key="1">
    <citation type="journal article" date="2002" name="Nucleic Acids Res.">
        <title>Genome sequence of Shigella flexneri 2a: insights into pathogenicity through comparison with genomes of Escherichia coli K12 and O157.</title>
        <authorList>
            <person name="Jin Q."/>
            <person name="Yuan Z."/>
            <person name="Xu J."/>
            <person name="Wang Y."/>
            <person name="Shen Y."/>
            <person name="Lu W."/>
            <person name="Wang J."/>
            <person name="Liu H."/>
            <person name="Yang J."/>
            <person name="Yang F."/>
            <person name="Zhang X."/>
            <person name="Zhang J."/>
            <person name="Yang G."/>
            <person name="Wu H."/>
            <person name="Qu D."/>
            <person name="Dong J."/>
            <person name="Sun L."/>
            <person name="Xue Y."/>
            <person name="Zhao A."/>
            <person name="Gao Y."/>
            <person name="Zhu J."/>
            <person name="Kan B."/>
            <person name="Ding K."/>
            <person name="Chen S."/>
            <person name="Cheng H."/>
            <person name="Yao Z."/>
            <person name="He B."/>
            <person name="Chen R."/>
            <person name="Ma D."/>
            <person name="Qiang B."/>
            <person name="Wen Y."/>
            <person name="Hou Y."/>
            <person name="Yu J."/>
        </authorList>
    </citation>
    <scope>NUCLEOTIDE SEQUENCE [LARGE SCALE GENOMIC DNA]</scope>
    <source>
        <strain>301 / Serotype 2a</strain>
    </source>
</reference>
<reference key="2">
    <citation type="journal article" date="2003" name="Infect. Immun.">
        <title>Complete genome sequence and comparative genomics of Shigella flexneri serotype 2a strain 2457T.</title>
        <authorList>
            <person name="Wei J."/>
            <person name="Goldberg M.B."/>
            <person name="Burland V."/>
            <person name="Venkatesan M.M."/>
            <person name="Deng W."/>
            <person name="Fournier G."/>
            <person name="Mayhew G.F."/>
            <person name="Plunkett G. III"/>
            <person name="Rose D.J."/>
            <person name="Darling A."/>
            <person name="Mau B."/>
            <person name="Perna N.T."/>
            <person name="Payne S.M."/>
            <person name="Runyen-Janecky L.J."/>
            <person name="Zhou S."/>
            <person name="Schwartz D.C."/>
            <person name="Blattner F.R."/>
        </authorList>
    </citation>
    <scope>NUCLEOTIDE SEQUENCE [LARGE SCALE GENOMIC DNA]</scope>
    <source>
        <strain>ATCC 700930 / 2457T / Serotype 2a</strain>
    </source>
</reference>
<proteinExistence type="inferred from homology"/>
<name>RNB_SHIFL</name>
<gene>
    <name evidence="2" type="primary">rnb</name>
    <name type="ordered locus">SF1291</name>
    <name type="ordered locus">S1373</name>
</gene>
<comment type="function">
    <text evidence="2">Involved in mRNA degradation. Hydrolyzes single-stranded polyribonucleotides processively in the 3' to 5' direction.</text>
</comment>
<comment type="catalytic activity">
    <reaction evidence="2">
        <text>Exonucleolytic cleavage in the 3'- to 5'-direction to yield nucleoside 5'-phosphates.</text>
        <dbReference type="EC" id="3.1.13.1"/>
    </reaction>
</comment>
<comment type="subcellular location">
    <subcellularLocation>
        <location evidence="2">Cytoplasm</location>
    </subcellularLocation>
</comment>
<comment type="similarity">
    <text evidence="2">Belongs to the RNR ribonuclease family. RNase II subfamily.</text>
</comment>